<name>DESA_ARTPT</name>
<reference key="1">
    <citation type="submission" date="1995-04" db="EMBL/GenBank/DDBJ databases">
        <title>Biosynthesis of gamma-linolenic acid in the cyanobacterium Spirulina platensis.</title>
        <authorList>
            <person name="Murata N."/>
            <person name="Deshnium P."/>
            <person name="Tasaka Y."/>
        </authorList>
    </citation>
    <scope>NUCLEOTIDE SEQUENCE [GENOMIC DNA]</scope>
</reference>
<reference key="2">
    <citation type="journal article" date="2003" name="J. Biosci. Bioeng.">
        <title>Differential responses of three acyl-lipid desaturases to immediate temperature reduction occurring in two lipid membranes of Spirulina platensis strain C1.</title>
        <authorList>
            <person name="Hongsthong A."/>
            <person name="Deshnium P."/>
            <person name="Paithoonrangsarid K."/>
            <person name="Cheevadhanarak S."/>
            <person name="Tanticharoen M."/>
        </authorList>
    </citation>
    <scope>SUBCELLULAR LOCATION</scope>
    <scope>INDUCTION</scope>
    <source>
        <strain>C1</strain>
    </source>
</reference>
<reference key="3">
    <citation type="journal article" date="2004" name="Mol. Biol. Rep.">
        <title>The expression of three desaturase genes of Spirulina platensis in Escherichia coli DH5alpha. Heterologous expression of Spirulina-desaturase genes.</title>
        <authorList>
            <person name="Apiradee H."/>
            <person name="Kalyanee P."/>
            <person name="Pongsathon P."/>
            <person name="Patcharaporn D."/>
            <person name="Matura S."/>
            <person name="Sanjukta S."/>
            <person name="Supapon C."/>
            <person name="Morakot T."/>
        </authorList>
    </citation>
    <scope>FUNCTION</scope>
    <scope>CATALYTIC ACTIVITY</scope>
    <source>
        <strain>C1</strain>
    </source>
</reference>
<reference key="4">
    <citation type="journal article" date="2008" name="FEMS Microbiol. Lett.">
        <title>A combined stress response analysis of Spirulina platensis in terms of global differentially expressed proteins, and mRNA levels and stability of fatty acid biosynthesis genes.</title>
        <authorList>
            <person name="Jeamton W."/>
            <person name="Mungpakdee S."/>
            <person name="Sirijuntarut M."/>
            <person name="Prommeenate P."/>
            <person name="Cheevadhanarak S."/>
            <person name="Tanticharoen M."/>
            <person name="Hongsthong A."/>
        </authorList>
    </citation>
    <scope>INDUCTION</scope>
</reference>
<feature type="chain" id="PRO_0000185416" description="sn-1 oleoyl-lipid 12-desaturase">
    <location>
        <begin position="1"/>
        <end position="351"/>
    </location>
</feature>
<feature type="transmembrane region" description="Helical" evidence="3">
    <location>
        <begin position="44"/>
        <end position="62"/>
    </location>
</feature>
<feature type="transmembrane region" description="Helical" evidence="3">
    <location>
        <begin position="68"/>
        <end position="88"/>
    </location>
</feature>
<feature type="transmembrane region" description="Helical" evidence="3">
    <location>
        <begin position="100"/>
        <end position="120"/>
    </location>
</feature>
<feature type="transmembrane region" description="Helical" evidence="3">
    <location>
        <begin position="199"/>
        <end position="219"/>
    </location>
</feature>
<feature type="transmembrane region" description="Helical" evidence="3">
    <location>
        <begin position="221"/>
        <end position="241"/>
    </location>
</feature>
<feature type="region of interest" description="Disordered" evidence="4">
    <location>
        <begin position="1"/>
        <end position="20"/>
    </location>
</feature>
<feature type="short sequence motif" description="Histidine box-1" evidence="2">
    <location>
        <begin position="89"/>
        <end position="93"/>
    </location>
</feature>
<feature type="short sequence motif" description="Histidine box-2" evidence="2">
    <location>
        <begin position="125"/>
        <end position="129"/>
    </location>
</feature>
<feature type="short sequence motif" description="Histidine box-3" evidence="2">
    <location>
        <begin position="289"/>
        <end position="293"/>
    </location>
</feature>
<keyword id="KW-0275">Fatty acid biosynthesis</keyword>
<keyword id="KW-0276">Fatty acid metabolism</keyword>
<keyword id="KW-0408">Iron</keyword>
<keyword id="KW-0444">Lipid biosynthesis</keyword>
<keyword id="KW-0443">Lipid metabolism</keyword>
<keyword id="KW-0472">Membrane</keyword>
<keyword id="KW-0560">Oxidoreductase</keyword>
<keyword id="KW-0793">Thylakoid</keyword>
<keyword id="KW-0812">Transmembrane</keyword>
<keyword id="KW-1133">Transmembrane helix</keyword>
<comment type="function">
    <text evidence="5">Desaturase involved in fatty acid biosynthesis (PubMed:15560373). Introduces a double bond at carbon 12 of oleoyl groups (18:1) attached to the sn-1 position of the glycerol moiety of membrane glycerolipids (PubMed:15560373).</text>
</comment>
<comment type="catalytic activity">
    <reaction evidence="5">
        <text>a 1-[(9Z)-octadecenoyl]-2-acyl-glycerolipid + 2 reduced [2Fe-2S]-[ferredoxin] + O2 + 2 H(+) = a 1-[(9Z,12Z)-octadecdienoyl]-2-acyl-glycerolipid + 2 oxidized [2Fe-2S]-[ferredoxin] + 2 H2O</text>
        <dbReference type="Rhea" id="RHEA:46776"/>
        <dbReference type="Rhea" id="RHEA-COMP:10000"/>
        <dbReference type="Rhea" id="RHEA-COMP:10001"/>
        <dbReference type="ChEBI" id="CHEBI:15377"/>
        <dbReference type="ChEBI" id="CHEBI:15378"/>
        <dbReference type="ChEBI" id="CHEBI:15379"/>
        <dbReference type="ChEBI" id="CHEBI:33737"/>
        <dbReference type="ChEBI" id="CHEBI:33738"/>
        <dbReference type="ChEBI" id="CHEBI:87008"/>
        <dbReference type="ChEBI" id="CHEBI:87010"/>
        <dbReference type="EC" id="1.14.19.45"/>
    </reaction>
    <physiologicalReaction direction="left-to-right" evidence="5">
        <dbReference type="Rhea" id="RHEA:46777"/>
    </physiologicalReaction>
</comment>
<comment type="cofactor">
    <cofactor evidence="1">
        <name>Fe(2+)</name>
        <dbReference type="ChEBI" id="CHEBI:29033"/>
    </cofactor>
</comment>
<comment type="pathway">
    <text evidence="10">Lipid metabolism; polyunsaturated fatty acid biosynthesis.</text>
</comment>
<comment type="subcellular location">
    <subcellularLocation>
        <location evidence="6">Cellular thylakoid membrane</location>
        <topology evidence="3">Multi-pass membrane protein</topology>
    </subcellularLocation>
</comment>
<comment type="induction">
    <text evidence="6 7">Expression is light and temperature-dependent with a decrease with decreased light conditions or lower temperatures.</text>
</comment>
<comment type="domain">
    <text evidence="1">The histidine box domains are involved in binding the catalytic metal ions.</text>
</comment>
<comment type="similarity">
    <text evidence="9">Belongs to the fatty acid desaturase type 2 family.</text>
</comment>
<organism>
    <name type="scientific">Arthrospira platensis</name>
    <name type="common">Spirulina platensis</name>
    <dbReference type="NCBI Taxonomy" id="118562"/>
    <lineage>
        <taxon>Bacteria</taxon>
        <taxon>Bacillati</taxon>
        <taxon>Cyanobacteriota</taxon>
        <taxon>Cyanophyceae</taxon>
        <taxon>Oscillatoriophycideae</taxon>
        <taxon>Oscillatoriales</taxon>
        <taxon>Microcoleaceae</taxon>
        <taxon>Arthrospira</taxon>
    </lineage>
</organism>
<evidence type="ECO:0000250" key="1">
    <source>
        <dbReference type="UniProtKB" id="O00767"/>
    </source>
</evidence>
<evidence type="ECO:0000250" key="2">
    <source>
        <dbReference type="UniProtKB" id="Q54795"/>
    </source>
</evidence>
<evidence type="ECO:0000255" key="3"/>
<evidence type="ECO:0000256" key="4">
    <source>
        <dbReference type="SAM" id="MobiDB-lite"/>
    </source>
</evidence>
<evidence type="ECO:0000269" key="5">
    <source>
    </source>
</evidence>
<evidence type="ECO:0000269" key="6">
    <source>
    </source>
</evidence>
<evidence type="ECO:0000269" key="7">
    <source>
    </source>
</evidence>
<evidence type="ECO:0000303" key="8">
    <source>
    </source>
</evidence>
<evidence type="ECO:0000305" key="9"/>
<evidence type="ECO:0000305" key="10">
    <source>
    </source>
</evidence>
<dbReference type="EC" id="1.14.19.45" evidence="5"/>
<dbReference type="EMBL" id="X86736">
    <property type="protein sequence ID" value="CAA60415.1"/>
    <property type="molecule type" value="Genomic_DNA"/>
</dbReference>
<dbReference type="PIR" id="S54259">
    <property type="entry name" value="S54259"/>
</dbReference>
<dbReference type="SMR" id="Q54794"/>
<dbReference type="UniPathway" id="UPA00658"/>
<dbReference type="GO" id="GO:0031676">
    <property type="term" value="C:plasma membrane-derived thylakoid membrane"/>
    <property type="evidence" value="ECO:0007669"/>
    <property type="project" value="UniProtKB-SubCell"/>
</dbReference>
<dbReference type="GO" id="GO:0102985">
    <property type="term" value="F:acyl-CoA (9+3)-desaturase activity"/>
    <property type="evidence" value="ECO:0007669"/>
    <property type="project" value="UniProtKB-EC"/>
</dbReference>
<dbReference type="GO" id="GO:0006636">
    <property type="term" value="P:unsaturated fatty acid biosynthetic process"/>
    <property type="evidence" value="ECO:0007669"/>
    <property type="project" value="UniProtKB-UniPathway"/>
</dbReference>
<dbReference type="CDD" id="cd03507">
    <property type="entry name" value="Delta12-FADS-like"/>
    <property type="match status" value="1"/>
</dbReference>
<dbReference type="InterPro" id="IPR005804">
    <property type="entry name" value="FA_desaturase_dom"/>
</dbReference>
<dbReference type="InterPro" id="IPR012171">
    <property type="entry name" value="Fatty_acid_desaturase"/>
</dbReference>
<dbReference type="PANTHER" id="PTHR32100">
    <property type="entry name" value="OMEGA-6 FATTY ACID DESATURASE, CHLOROPLASTIC"/>
    <property type="match status" value="1"/>
</dbReference>
<dbReference type="Pfam" id="PF00487">
    <property type="entry name" value="FA_desaturase"/>
    <property type="match status" value="1"/>
</dbReference>
<proteinExistence type="evidence at protein level"/>
<gene>
    <name evidence="8" type="primary">desA</name>
</gene>
<protein>
    <recommendedName>
        <fullName evidence="9">sn-1 oleoyl-lipid 12-desaturase</fullName>
        <ecNumber evidence="5">1.14.19.45</ecNumber>
    </recommendedName>
    <alternativeName>
        <fullName evidence="9">Delta(12)-fatty-acid desaturase</fullName>
        <shortName evidence="8">Delta12 desaturase</shortName>
    </alternativeName>
</protein>
<sequence length="351" mass="40928">MTLSIVKSEDSSSRPSAVPSDLPLEEDIINTLPSGVFVQDRYKAWMTVIINVVMVGLGWLGIAIAPWFLLPVVWVFTGTALTGFFVIGHDCGHRSFSRNVWVNDWVGHILFLPIIYPFHSWRIGHNQHHKYTNRMELDNAWQPWRKEEYQNAGKFMQVTYDLFRGRAWWIGSILHWASIHFDWTKFEGKQRQQVKFSSLLVIGAAAIAFPTMILTIGVWGFVKFWVIPWLVFHFWMSTFTLLHHTIADIPFREPEQWHEAESQLSGTVHCNYSRWGEFLCHDINVHIPHHVTTAIPWYNLRTPTPVYRKIGGEYLYPECDFSWGLMKQVVDHAICMMRITIISQSLTTKRV</sequence>
<accession>Q54794</accession>